<sequence length="46" mass="5380">MKRTFQPSVLKRNRSHGFRARMATKNGRQVLARRRAKGRARLTVSK</sequence>
<feature type="chain" id="PRO_1000196046" description="Large ribosomal subunit protein bL34">
    <location>
        <begin position="1"/>
        <end position="46"/>
    </location>
</feature>
<reference key="1">
    <citation type="journal article" date="2009" name="PLoS Genet.">
        <title>Organised genome dynamics in the Escherichia coli species results in highly diverse adaptive paths.</title>
        <authorList>
            <person name="Touchon M."/>
            <person name="Hoede C."/>
            <person name="Tenaillon O."/>
            <person name="Barbe V."/>
            <person name="Baeriswyl S."/>
            <person name="Bidet P."/>
            <person name="Bingen E."/>
            <person name="Bonacorsi S."/>
            <person name="Bouchier C."/>
            <person name="Bouvet O."/>
            <person name="Calteau A."/>
            <person name="Chiapello H."/>
            <person name="Clermont O."/>
            <person name="Cruveiller S."/>
            <person name="Danchin A."/>
            <person name="Diard M."/>
            <person name="Dossat C."/>
            <person name="Karoui M.E."/>
            <person name="Frapy E."/>
            <person name="Garry L."/>
            <person name="Ghigo J.M."/>
            <person name="Gilles A.M."/>
            <person name="Johnson J."/>
            <person name="Le Bouguenec C."/>
            <person name="Lescat M."/>
            <person name="Mangenot S."/>
            <person name="Martinez-Jehanne V."/>
            <person name="Matic I."/>
            <person name="Nassif X."/>
            <person name="Oztas S."/>
            <person name="Petit M.A."/>
            <person name="Pichon C."/>
            <person name="Rouy Z."/>
            <person name="Ruf C.S."/>
            <person name="Schneider D."/>
            <person name="Tourret J."/>
            <person name="Vacherie B."/>
            <person name="Vallenet D."/>
            <person name="Medigue C."/>
            <person name="Rocha E.P.C."/>
            <person name="Denamur E."/>
        </authorList>
    </citation>
    <scope>NUCLEOTIDE SEQUENCE [LARGE SCALE GENOMIC DNA]</scope>
    <source>
        <strain>UMN026 / ExPEC</strain>
    </source>
</reference>
<proteinExistence type="inferred from homology"/>
<protein>
    <recommendedName>
        <fullName evidence="1">Large ribosomal subunit protein bL34</fullName>
    </recommendedName>
    <alternativeName>
        <fullName evidence="2">50S ribosomal protein L34</fullName>
    </alternativeName>
</protein>
<gene>
    <name evidence="1" type="primary">rpmH</name>
    <name type="ordered locus">ECUMN_4234</name>
</gene>
<name>RL34_ECOLU</name>
<organism>
    <name type="scientific">Escherichia coli O17:K52:H18 (strain UMN026 / ExPEC)</name>
    <dbReference type="NCBI Taxonomy" id="585056"/>
    <lineage>
        <taxon>Bacteria</taxon>
        <taxon>Pseudomonadati</taxon>
        <taxon>Pseudomonadota</taxon>
        <taxon>Gammaproteobacteria</taxon>
        <taxon>Enterobacterales</taxon>
        <taxon>Enterobacteriaceae</taxon>
        <taxon>Escherichia</taxon>
    </lineage>
</organism>
<keyword id="KW-0687">Ribonucleoprotein</keyword>
<keyword id="KW-0689">Ribosomal protein</keyword>
<evidence type="ECO:0000255" key="1">
    <source>
        <dbReference type="HAMAP-Rule" id="MF_00391"/>
    </source>
</evidence>
<evidence type="ECO:0000305" key="2"/>
<accession>B7NF20</accession>
<comment type="similarity">
    <text evidence="1">Belongs to the bacterial ribosomal protein bL34 family.</text>
</comment>
<dbReference type="EMBL" id="CU928163">
    <property type="protein sequence ID" value="CAR15374.1"/>
    <property type="molecule type" value="Genomic_DNA"/>
</dbReference>
<dbReference type="RefSeq" id="WP_000831330.1">
    <property type="nucleotide sequence ID" value="NC_011751.1"/>
</dbReference>
<dbReference type="RefSeq" id="YP_002414868.1">
    <property type="nucleotide sequence ID" value="NC_011751.1"/>
</dbReference>
<dbReference type="SMR" id="B7NF20"/>
<dbReference type="STRING" id="585056.ECUMN_4234"/>
<dbReference type="GeneID" id="98190980"/>
<dbReference type="KEGG" id="eum:ECUMN_4234"/>
<dbReference type="PATRIC" id="fig|585056.7.peg.4406"/>
<dbReference type="HOGENOM" id="CLU_129938_2_1_6"/>
<dbReference type="Proteomes" id="UP000007097">
    <property type="component" value="Chromosome"/>
</dbReference>
<dbReference type="GO" id="GO:1990904">
    <property type="term" value="C:ribonucleoprotein complex"/>
    <property type="evidence" value="ECO:0007669"/>
    <property type="project" value="UniProtKB-KW"/>
</dbReference>
<dbReference type="GO" id="GO:0005840">
    <property type="term" value="C:ribosome"/>
    <property type="evidence" value="ECO:0007669"/>
    <property type="project" value="UniProtKB-KW"/>
</dbReference>
<dbReference type="GO" id="GO:0003735">
    <property type="term" value="F:structural constituent of ribosome"/>
    <property type="evidence" value="ECO:0007669"/>
    <property type="project" value="InterPro"/>
</dbReference>
<dbReference type="GO" id="GO:0006412">
    <property type="term" value="P:translation"/>
    <property type="evidence" value="ECO:0007669"/>
    <property type="project" value="UniProtKB-UniRule"/>
</dbReference>
<dbReference type="FunFam" id="1.10.287.3980:FF:000001">
    <property type="entry name" value="Mitochondrial ribosomal protein L34"/>
    <property type="match status" value="1"/>
</dbReference>
<dbReference type="Gene3D" id="1.10.287.3980">
    <property type="match status" value="1"/>
</dbReference>
<dbReference type="HAMAP" id="MF_00391">
    <property type="entry name" value="Ribosomal_bL34"/>
    <property type="match status" value="1"/>
</dbReference>
<dbReference type="InterPro" id="IPR000271">
    <property type="entry name" value="Ribosomal_bL34"/>
</dbReference>
<dbReference type="InterPro" id="IPR020939">
    <property type="entry name" value="Ribosomal_bL34_CS"/>
</dbReference>
<dbReference type="NCBIfam" id="TIGR01030">
    <property type="entry name" value="rpmH_bact"/>
    <property type="match status" value="1"/>
</dbReference>
<dbReference type="PANTHER" id="PTHR14503:SF4">
    <property type="entry name" value="LARGE RIBOSOMAL SUBUNIT PROTEIN BL34M"/>
    <property type="match status" value="1"/>
</dbReference>
<dbReference type="PANTHER" id="PTHR14503">
    <property type="entry name" value="MITOCHONDRIAL RIBOSOMAL PROTEIN 34 FAMILY MEMBER"/>
    <property type="match status" value="1"/>
</dbReference>
<dbReference type="Pfam" id="PF00468">
    <property type="entry name" value="Ribosomal_L34"/>
    <property type="match status" value="1"/>
</dbReference>
<dbReference type="PROSITE" id="PS00784">
    <property type="entry name" value="RIBOSOMAL_L34"/>
    <property type="match status" value="1"/>
</dbReference>